<gene>
    <name evidence="1" type="primary">cinA</name>
    <name type="ordered locus">LVIS_1238</name>
</gene>
<comment type="similarity">
    <text evidence="1">Belongs to the CinA family.</text>
</comment>
<dbReference type="EMBL" id="CP000416">
    <property type="protein sequence ID" value="ABJ64344.1"/>
    <property type="molecule type" value="Genomic_DNA"/>
</dbReference>
<dbReference type="RefSeq" id="WP_011667974.1">
    <property type="nucleotide sequence ID" value="NC_008497.1"/>
</dbReference>
<dbReference type="SMR" id="Q03R28"/>
<dbReference type="STRING" id="387344.LVIS_1238"/>
<dbReference type="KEGG" id="lbr:LVIS_1238"/>
<dbReference type="eggNOG" id="COG1058">
    <property type="taxonomic scope" value="Bacteria"/>
</dbReference>
<dbReference type="eggNOG" id="COG1546">
    <property type="taxonomic scope" value="Bacteria"/>
</dbReference>
<dbReference type="HOGENOM" id="CLU_030805_9_3_9"/>
<dbReference type="Proteomes" id="UP000001652">
    <property type="component" value="Chromosome"/>
</dbReference>
<dbReference type="CDD" id="cd00885">
    <property type="entry name" value="cinA"/>
    <property type="match status" value="1"/>
</dbReference>
<dbReference type="Gene3D" id="3.30.70.2860">
    <property type="match status" value="1"/>
</dbReference>
<dbReference type="Gene3D" id="3.90.950.20">
    <property type="entry name" value="CinA-like"/>
    <property type="match status" value="1"/>
</dbReference>
<dbReference type="Gene3D" id="3.40.980.10">
    <property type="entry name" value="MoaB/Mog-like domain"/>
    <property type="match status" value="1"/>
</dbReference>
<dbReference type="HAMAP" id="MF_00226_B">
    <property type="entry name" value="CinA_B"/>
    <property type="match status" value="1"/>
</dbReference>
<dbReference type="InterPro" id="IPR050101">
    <property type="entry name" value="CinA"/>
</dbReference>
<dbReference type="InterPro" id="IPR036653">
    <property type="entry name" value="CinA-like_C"/>
</dbReference>
<dbReference type="InterPro" id="IPR008136">
    <property type="entry name" value="CinA_C"/>
</dbReference>
<dbReference type="InterPro" id="IPR041424">
    <property type="entry name" value="CinA_KH"/>
</dbReference>
<dbReference type="InterPro" id="IPR008135">
    <property type="entry name" value="Competence-induced_CinA"/>
</dbReference>
<dbReference type="InterPro" id="IPR036425">
    <property type="entry name" value="MoaB/Mog-like_dom_sf"/>
</dbReference>
<dbReference type="InterPro" id="IPR001453">
    <property type="entry name" value="MoaB/Mog_dom"/>
</dbReference>
<dbReference type="NCBIfam" id="TIGR00200">
    <property type="entry name" value="cinA_nterm"/>
    <property type="match status" value="1"/>
</dbReference>
<dbReference type="NCBIfam" id="TIGR00177">
    <property type="entry name" value="molyb_syn"/>
    <property type="match status" value="1"/>
</dbReference>
<dbReference type="NCBIfam" id="TIGR00199">
    <property type="entry name" value="PncC_domain"/>
    <property type="match status" value="1"/>
</dbReference>
<dbReference type="NCBIfam" id="NF001813">
    <property type="entry name" value="PRK00549.1"/>
    <property type="match status" value="1"/>
</dbReference>
<dbReference type="PANTHER" id="PTHR13939">
    <property type="entry name" value="NICOTINAMIDE-NUCLEOTIDE AMIDOHYDROLASE PNCC"/>
    <property type="match status" value="1"/>
</dbReference>
<dbReference type="PANTHER" id="PTHR13939:SF0">
    <property type="entry name" value="NMN AMIDOHYDROLASE-LIKE PROTEIN YFAY"/>
    <property type="match status" value="1"/>
</dbReference>
<dbReference type="Pfam" id="PF02464">
    <property type="entry name" value="CinA"/>
    <property type="match status" value="1"/>
</dbReference>
<dbReference type="Pfam" id="PF18146">
    <property type="entry name" value="CinA_KH"/>
    <property type="match status" value="1"/>
</dbReference>
<dbReference type="Pfam" id="PF00994">
    <property type="entry name" value="MoCF_biosynth"/>
    <property type="match status" value="1"/>
</dbReference>
<dbReference type="PIRSF" id="PIRSF006728">
    <property type="entry name" value="CinA"/>
    <property type="match status" value="1"/>
</dbReference>
<dbReference type="SMART" id="SM00852">
    <property type="entry name" value="MoCF_biosynth"/>
    <property type="match status" value="1"/>
</dbReference>
<dbReference type="SUPFAM" id="SSF142433">
    <property type="entry name" value="CinA-like"/>
    <property type="match status" value="1"/>
</dbReference>
<dbReference type="SUPFAM" id="SSF53218">
    <property type="entry name" value="Molybdenum cofactor biosynthesis proteins"/>
    <property type="match status" value="1"/>
</dbReference>
<keyword id="KW-1185">Reference proteome</keyword>
<protein>
    <recommendedName>
        <fullName evidence="1">Putative competence-damage inducible protein</fullName>
    </recommendedName>
</protein>
<proteinExistence type="inferred from homology"/>
<name>CINA_LEVBA</name>
<sequence length="416" mass="44779">MQAEIIAVGTEILLGQIVDTNSAFIARELAEAGIEVYYHSLVGDNATRLTAVVEQARSRSDLVIISGGLGPTKDDLTKQTVAHLLGVKLVEDALAMAKIRRRFAINGREMTPNNRLQALYPAGSQPLANRTGLAVGAFYQDPDGADIMLLPGPPSETEPMFREQALPLLKQTYPRSEYLSSRVLRFFGIGESQLVTQLSDLIDQQTNPTIAPYAKVNEVTLRLTAQAPDEMQGQRLLDDLTATIKARVGDYLYGYGDDNSLAAVVVQTLIDRQLTITAAESLTAGQFQSTLGSVPGVSAVFPGGFVTYAASAKHDLLGVSQATIDQDGVVSAATAKEMASRSRERLDTDFSLSFTGVAGPDALEGQPAGTVWLGLAQRGQQPQAKLLHLTGTRSAIRERSVLTGLDWLRRTLQKVK</sequence>
<evidence type="ECO:0000255" key="1">
    <source>
        <dbReference type="HAMAP-Rule" id="MF_00226"/>
    </source>
</evidence>
<accession>Q03R28</accession>
<reference key="1">
    <citation type="journal article" date="2006" name="Proc. Natl. Acad. Sci. U.S.A.">
        <title>Comparative genomics of the lactic acid bacteria.</title>
        <authorList>
            <person name="Makarova K.S."/>
            <person name="Slesarev A."/>
            <person name="Wolf Y.I."/>
            <person name="Sorokin A."/>
            <person name="Mirkin B."/>
            <person name="Koonin E.V."/>
            <person name="Pavlov A."/>
            <person name="Pavlova N."/>
            <person name="Karamychev V."/>
            <person name="Polouchine N."/>
            <person name="Shakhova V."/>
            <person name="Grigoriev I."/>
            <person name="Lou Y."/>
            <person name="Rohksar D."/>
            <person name="Lucas S."/>
            <person name="Huang K."/>
            <person name="Goodstein D.M."/>
            <person name="Hawkins T."/>
            <person name="Plengvidhya V."/>
            <person name="Welker D."/>
            <person name="Hughes J."/>
            <person name="Goh Y."/>
            <person name="Benson A."/>
            <person name="Baldwin K."/>
            <person name="Lee J.-H."/>
            <person name="Diaz-Muniz I."/>
            <person name="Dosti B."/>
            <person name="Smeianov V."/>
            <person name="Wechter W."/>
            <person name="Barabote R."/>
            <person name="Lorca G."/>
            <person name="Altermann E."/>
            <person name="Barrangou R."/>
            <person name="Ganesan B."/>
            <person name="Xie Y."/>
            <person name="Rawsthorne H."/>
            <person name="Tamir D."/>
            <person name="Parker C."/>
            <person name="Breidt F."/>
            <person name="Broadbent J.R."/>
            <person name="Hutkins R."/>
            <person name="O'Sullivan D."/>
            <person name="Steele J."/>
            <person name="Unlu G."/>
            <person name="Saier M.H. Jr."/>
            <person name="Klaenhammer T."/>
            <person name="Richardson P."/>
            <person name="Kozyavkin S."/>
            <person name="Weimer B.C."/>
            <person name="Mills D.A."/>
        </authorList>
    </citation>
    <scope>NUCLEOTIDE SEQUENCE [LARGE SCALE GENOMIC DNA]</scope>
    <source>
        <strain>ATCC 367 / BCRC 12310 / CIP 105137 / JCM 1170 / LMG 11437 / NCIMB 947 / NCTC 947</strain>
    </source>
</reference>
<organism>
    <name type="scientific">Levilactobacillus brevis (strain ATCC 367 / BCRC 12310 / CIP 105137 / JCM 1170 / LMG 11437 / NCIMB 947 / NCTC 947)</name>
    <name type="common">Lactobacillus brevis</name>
    <dbReference type="NCBI Taxonomy" id="387344"/>
    <lineage>
        <taxon>Bacteria</taxon>
        <taxon>Bacillati</taxon>
        <taxon>Bacillota</taxon>
        <taxon>Bacilli</taxon>
        <taxon>Lactobacillales</taxon>
        <taxon>Lactobacillaceae</taxon>
        <taxon>Levilactobacillus</taxon>
    </lineage>
</organism>
<feature type="chain" id="PRO_1000058710" description="Putative competence-damage inducible protein">
    <location>
        <begin position="1"/>
        <end position="416"/>
    </location>
</feature>